<name>SYFB_METLZ</name>
<accession>A2ST82</accession>
<feature type="chain" id="PRO_1000022421" description="Phenylalanine--tRNA ligase beta subunit">
    <location>
        <begin position="1"/>
        <end position="540"/>
    </location>
</feature>
<feature type="domain" description="B5" evidence="1">
    <location>
        <begin position="266"/>
        <end position="342"/>
    </location>
</feature>
<feature type="binding site" evidence="1">
    <location>
        <position position="320"/>
    </location>
    <ligand>
        <name>Mg(2+)</name>
        <dbReference type="ChEBI" id="CHEBI:18420"/>
        <note>shared with alpha subunit</note>
    </ligand>
</feature>
<feature type="binding site" evidence="1">
    <location>
        <position position="326"/>
    </location>
    <ligand>
        <name>Mg(2+)</name>
        <dbReference type="ChEBI" id="CHEBI:18420"/>
        <note>shared with alpha subunit</note>
    </ligand>
</feature>
<feature type="binding site" evidence="1">
    <location>
        <position position="329"/>
    </location>
    <ligand>
        <name>Mg(2+)</name>
        <dbReference type="ChEBI" id="CHEBI:18420"/>
        <note>shared with alpha subunit</note>
    </ligand>
</feature>
<feature type="binding site" evidence="1">
    <location>
        <position position="330"/>
    </location>
    <ligand>
        <name>Mg(2+)</name>
        <dbReference type="ChEBI" id="CHEBI:18420"/>
        <note>shared with alpha subunit</note>
    </ligand>
</feature>
<sequence>MPIVKLNNEYLTRLTGTDIETIRSSLPMMGSEVEREEEKQTDVQFFPNRPDLYSAEGTARALRGYLGIETGLPTYEVKPSGISFSVDPKLANIRPYLGSAVIRNVHMDNAMIESLMGLQESLHWAVGRGRKKVAIGVHDLDKIEGPFSYIAADRKTTFVPLDYDVEMTMEEILAEHPKGKAYARIVEEFERFPLITDAKGRVCSFPPIINGELTRVTEDTQNILLDVTGIEPRAVSVAVKILCAAFVEMGAEIESVEIDGVVSPDLRPEKRTVSVSECSKLTGIPMTASQMTELLMKMRFGAEVIDEDTVSVDIPCYRADIMHDHDVYEDAAIAYGYDKIETSLPPSFTVGKPHPVQKLYSLVRNIMVGLSYIENTPFTLTSGDVSYSLMHRPENPAALHVLHPISEDQTIIRTDILPLLMESLSINRSRELPQKIFACGDVVENLVTYPKMAAASIHTSADFSEIYAVMDAFCRMMSIEYEVRDSADDAFIPGRRGDIYVSGEKIGVFGEINPDVLVGFGLEHQAVAFEIDLRGFVSNE</sequence>
<organism>
    <name type="scientific">Methanocorpusculum labreanum (strain ATCC 43576 / DSM 4855 / Z)</name>
    <dbReference type="NCBI Taxonomy" id="410358"/>
    <lineage>
        <taxon>Archaea</taxon>
        <taxon>Methanobacteriati</taxon>
        <taxon>Methanobacteriota</taxon>
        <taxon>Stenosarchaea group</taxon>
        <taxon>Methanomicrobia</taxon>
        <taxon>Methanomicrobiales</taxon>
        <taxon>Methanocorpusculaceae</taxon>
        <taxon>Methanocorpusculum</taxon>
    </lineage>
</organism>
<comment type="catalytic activity">
    <reaction evidence="1">
        <text>tRNA(Phe) + L-phenylalanine + ATP = L-phenylalanyl-tRNA(Phe) + AMP + diphosphate + H(+)</text>
        <dbReference type="Rhea" id="RHEA:19413"/>
        <dbReference type="Rhea" id="RHEA-COMP:9668"/>
        <dbReference type="Rhea" id="RHEA-COMP:9699"/>
        <dbReference type="ChEBI" id="CHEBI:15378"/>
        <dbReference type="ChEBI" id="CHEBI:30616"/>
        <dbReference type="ChEBI" id="CHEBI:33019"/>
        <dbReference type="ChEBI" id="CHEBI:58095"/>
        <dbReference type="ChEBI" id="CHEBI:78442"/>
        <dbReference type="ChEBI" id="CHEBI:78531"/>
        <dbReference type="ChEBI" id="CHEBI:456215"/>
        <dbReference type="EC" id="6.1.1.20"/>
    </reaction>
</comment>
<comment type="cofactor">
    <cofactor evidence="1">
        <name>Mg(2+)</name>
        <dbReference type="ChEBI" id="CHEBI:18420"/>
    </cofactor>
</comment>
<comment type="subunit">
    <text evidence="1">Tetramer of two alpha and two beta subunits.</text>
</comment>
<comment type="subcellular location">
    <subcellularLocation>
        <location evidence="1">Cytoplasm</location>
    </subcellularLocation>
</comment>
<comment type="similarity">
    <text evidence="1">Belongs to the phenylalanyl-tRNA synthetase beta subunit family. Type 2 subfamily.</text>
</comment>
<dbReference type="EC" id="6.1.1.20" evidence="1"/>
<dbReference type="EMBL" id="CP000559">
    <property type="protein sequence ID" value="ABN07538.1"/>
    <property type="molecule type" value="Genomic_DNA"/>
</dbReference>
<dbReference type="RefSeq" id="WP_011833741.1">
    <property type="nucleotide sequence ID" value="NC_008942.1"/>
</dbReference>
<dbReference type="SMR" id="A2ST82"/>
<dbReference type="STRING" id="410358.Mlab_1371"/>
<dbReference type="GeneID" id="4794850"/>
<dbReference type="KEGG" id="mla:Mlab_1371"/>
<dbReference type="eggNOG" id="arCOG00412">
    <property type="taxonomic scope" value="Archaea"/>
</dbReference>
<dbReference type="HOGENOM" id="CLU_020279_3_0_2"/>
<dbReference type="OrthoDB" id="10073at2157"/>
<dbReference type="Proteomes" id="UP000000365">
    <property type="component" value="Chromosome"/>
</dbReference>
<dbReference type="GO" id="GO:0009328">
    <property type="term" value="C:phenylalanine-tRNA ligase complex"/>
    <property type="evidence" value="ECO:0007669"/>
    <property type="project" value="TreeGrafter"/>
</dbReference>
<dbReference type="GO" id="GO:0005524">
    <property type="term" value="F:ATP binding"/>
    <property type="evidence" value="ECO:0007669"/>
    <property type="project" value="UniProtKB-UniRule"/>
</dbReference>
<dbReference type="GO" id="GO:0000287">
    <property type="term" value="F:magnesium ion binding"/>
    <property type="evidence" value="ECO:0007669"/>
    <property type="project" value="InterPro"/>
</dbReference>
<dbReference type="GO" id="GO:0004826">
    <property type="term" value="F:phenylalanine-tRNA ligase activity"/>
    <property type="evidence" value="ECO:0007669"/>
    <property type="project" value="UniProtKB-UniRule"/>
</dbReference>
<dbReference type="GO" id="GO:0003723">
    <property type="term" value="F:RNA binding"/>
    <property type="evidence" value="ECO:0007669"/>
    <property type="project" value="InterPro"/>
</dbReference>
<dbReference type="GO" id="GO:0006432">
    <property type="term" value="P:phenylalanyl-tRNA aminoacylation"/>
    <property type="evidence" value="ECO:0007669"/>
    <property type="project" value="UniProtKB-UniRule"/>
</dbReference>
<dbReference type="CDD" id="cd00769">
    <property type="entry name" value="PheRS_beta_core"/>
    <property type="match status" value="1"/>
</dbReference>
<dbReference type="FunFam" id="3.50.40.10:FF:000003">
    <property type="entry name" value="Phenylalanine--tRNA ligase beta subunit"/>
    <property type="match status" value="1"/>
</dbReference>
<dbReference type="Gene3D" id="3.30.56.10">
    <property type="match status" value="2"/>
</dbReference>
<dbReference type="Gene3D" id="3.30.930.10">
    <property type="entry name" value="Bira Bifunctional Protein, Domain 2"/>
    <property type="match status" value="1"/>
</dbReference>
<dbReference type="Gene3D" id="3.50.40.10">
    <property type="entry name" value="Phenylalanyl-trna Synthetase, Chain B, domain 3"/>
    <property type="match status" value="1"/>
</dbReference>
<dbReference type="HAMAP" id="MF_00284">
    <property type="entry name" value="Phe_tRNA_synth_beta2"/>
    <property type="match status" value="1"/>
</dbReference>
<dbReference type="InterPro" id="IPR045864">
    <property type="entry name" value="aa-tRNA-synth_II/BPL/LPL"/>
</dbReference>
<dbReference type="InterPro" id="IPR005146">
    <property type="entry name" value="B3/B4_tRNA-bd"/>
</dbReference>
<dbReference type="InterPro" id="IPR009061">
    <property type="entry name" value="DNA-bd_dom_put_sf"/>
</dbReference>
<dbReference type="InterPro" id="IPR045060">
    <property type="entry name" value="Phe-tRNA-ligase_IIc_bsu"/>
</dbReference>
<dbReference type="InterPro" id="IPR004531">
    <property type="entry name" value="Phe-tRNA-synth_IIc_bsu_arc_euk"/>
</dbReference>
<dbReference type="InterPro" id="IPR020825">
    <property type="entry name" value="Phe-tRNA_synthase-like_B3/B4"/>
</dbReference>
<dbReference type="InterPro" id="IPR022918">
    <property type="entry name" value="Phe_tRNA_ligase_beta2_arc"/>
</dbReference>
<dbReference type="InterPro" id="IPR041616">
    <property type="entry name" value="PheRS_beta_core"/>
</dbReference>
<dbReference type="InterPro" id="IPR005147">
    <property type="entry name" value="tRNA_synthase_B5-dom"/>
</dbReference>
<dbReference type="NCBIfam" id="TIGR00471">
    <property type="entry name" value="pheT_arch"/>
    <property type="match status" value="1"/>
</dbReference>
<dbReference type="PANTHER" id="PTHR10947:SF0">
    <property type="entry name" value="PHENYLALANINE--TRNA LIGASE BETA SUBUNIT"/>
    <property type="match status" value="1"/>
</dbReference>
<dbReference type="PANTHER" id="PTHR10947">
    <property type="entry name" value="PHENYLALANYL-TRNA SYNTHETASE BETA CHAIN AND LEUCINE-RICH REPEAT-CONTAINING PROTEIN 47"/>
    <property type="match status" value="1"/>
</dbReference>
<dbReference type="Pfam" id="PF03483">
    <property type="entry name" value="B3_4"/>
    <property type="match status" value="1"/>
</dbReference>
<dbReference type="Pfam" id="PF03484">
    <property type="entry name" value="B5"/>
    <property type="match status" value="1"/>
</dbReference>
<dbReference type="Pfam" id="PF17759">
    <property type="entry name" value="tRNA_synthFbeta"/>
    <property type="match status" value="1"/>
</dbReference>
<dbReference type="SMART" id="SM00873">
    <property type="entry name" value="B3_4"/>
    <property type="match status" value="1"/>
</dbReference>
<dbReference type="SMART" id="SM00874">
    <property type="entry name" value="B5"/>
    <property type="match status" value="1"/>
</dbReference>
<dbReference type="SUPFAM" id="SSF55681">
    <property type="entry name" value="Class II aaRS and biotin synthetases"/>
    <property type="match status" value="1"/>
</dbReference>
<dbReference type="SUPFAM" id="SSF56037">
    <property type="entry name" value="PheT/TilS domain"/>
    <property type="match status" value="1"/>
</dbReference>
<dbReference type="SUPFAM" id="SSF46955">
    <property type="entry name" value="Putative DNA-binding domain"/>
    <property type="match status" value="2"/>
</dbReference>
<dbReference type="PROSITE" id="PS51483">
    <property type="entry name" value="B5"/>
    <property type="match status" value="1"/>
</dbReference>
<gene>
    <name evidence="1" type="primary">pheT</name>
    <name type="ordered locus">Mlab_1371</name>
</gene>
<proteinExistence type="inferred from homology"/>
<reference key="1">
    <citation type="journal article" date="2009" name="Stand. Genomic Sci.">
        <title>Complete genome sequence of Methanocorpusculum labreanum type strain Z.</title>
        <authorList>
            <person name="Anderson I.J."/>
            <person name="Sieprawska-Lupa M."/>
            <person name="Goltsman E."/>
            <person name="Lapidus A."/>
            <person name="Copeland A."/>
            <person name="Glavina Del Rio T."/>
            <person name="Tice H."/>
            <person name="Dalin E."/>
            <person name="Barry K."/>
            <person name="Pitluck S."/>
            <person name="Hauser L."/>
            <person name="Land M."/>
            <person name="Lucas S."/>
            <person name="Richardson P."/>
            <person name="Whitman W.B."/>
            <person name="Kyrpides N.C."/>
        </authorList>
    </citation>
    <scope>NUCLEOTIDE SEQUENCE [LARGE SCALE GENOMIC DNA]</scope>
    <source>
        <strain>ATCC 43576 / DSM 4855 / Z</strain>
    </source>
</reference>
<evidence type="ECO:0000255" key="1">
    <source>
        <dbReference type="HAMAP-Rule" id="MF_00284"/>
    </source>
</evidence>
<keyword id="KW-0030">Aminoacyl-tRNA synthetase</keyword>
<keyword id="KW-0067">ATP-binding</keyword>
<keyword id="KW-0963">Cytoplasm</keyword>
<keyword id="KW-0436">Ligase</keyword>
<keyword id="KW-0460">Magnesium</keyword>
<keyword id="KW-0479">Metal-binding</keyword>
<keyword id="KW-0547">Nucleotide-binding</keyword>
<keyword id="KW-0648">Protein biosynthesis</keyword>
<keyword id="KW-1185">Reference proteome</keyword>
<protein>
    <recommendedName>
        <fullName evidence="1">Phenylalanine--tRNA ligase beta subunit</fullName>
        <ecNumber evidence="1">6.1.1.20</ecNumber>
    </recommendedName>
    <alternativeName>
        <fullName evidence="1">Phenylalanyl-tRNA synthetase beta subunit</fullName>
        <shortName evidence="1">PheRS</shortName>
    </alternativeName>
</protein>